<protein>
    <recommendedName>
        <fullName evidence="1">Photosystem II reaction center protein K</fullName>
        <shortName evidence="1">PSII-K</shortName>
    </recommendedName>
</protein>
<sequence length="61" mass="7061">MINIFSFICIYLHSALYSSSFFFGKLPEAYAFLNPIVDVMPVIPLFFFLLAFVWQAAVSFR</sequence>
<reference key="1">
    <citation type="journal article" date="2006" name="Mol. Biol. Evol.">
        <title>The complete chloroplast genome sequence of Pelargonium x hortorum: organization and evolution of the largest and most highly rearranged chloroplast genome of land plants.</title>
        <authorList>
            <person name="Chumley T.W."/>
            <person name="Palmer J.D."/>
            <person name="Mower J.P."/>
            <person name="Fourcade H.M."/>
            <person name="Calie P.J."/>
            <person name="Boore J.L."/>
            <person name="Jansen R.K."/>
        </authorList>
    </citation>
    <scope>NUCLEOTIDE SEQUENCE [LARGE SCALE GENOMIC DNA]</scope>
    <source>
        <strain>cv. Ringo White</strain>
    </source>
</reference>
<geneLocation type="chloroplast"/>
<dbReference type="EMBL" id="DQ897681">
    <property type="protein sequence ID" value="ABI17244.1"/>
    <property type="molecule type" value="Genomic_DNA"/>
</dbReference>
<dbReference type="RefSeq" id="YP_784053.1">
    <property type="nucleotide sequence ID" value="NC_008454.1"/>
</dbReference>
<dbReference type="SMR" id="Q06FX8"/>
<dbReference type="GeneID" id="4362813"/>
<dbReference type="GO" id="GO:0009535">
    <property type="term" value="C:chloroplast thylakoid membrane"/>
    <property type="evidence" value="ECO:0007669"/>
    <property type="project" value="UniProtKB-SubCell"/>
</dbReference>
<dbReference type="GO" id="GO:0009539">
    <property type="term" value="C:photosystem II reaction center"/>
    <property type="evidence" value="ECO:0007669"/>
    <property type="project" value="InterPro"/>
</dbReference>
<dbReference type="GO" id="GO:0015979">
    <property type="term" value="P:photosynthesis"/>
    <property type="evidence" value="ECO:0007669"/>
    <property type="project" value="UniProtKB-UniRule"/>
</dbReference>
<dbReference type="HAMAP" id="MF_00441">
    <property type="entry name" value="PSII_PsbK"/>
    <property type="match status" value="1"/>
</dbReference>
<dbReference type="InterPro" id="IPR003687">
    <property type="entry name" value="PSII_PsbK"/>
</dbReference>
<dbReference type="InterPro" id="IPR037270">
    <property type="entry name" value="PSII_PsbK_sf"/>
</dbReference>
<dbReference type="NCBIfam" id="NF002715">
    <property type="entry name" value="PRK02553.1"/>
    <property type="match status" value="1"/>
</dbReference>
<dbReference type="PANTHER" id="PTHR35325">
    <property type="match status" value="1"/>
</dbReference>
<dbReference type="PANTHER" id="PTHR35325:SF1">
    <property type="entry name" value="PHOTOSYSTEM II REACTION CENTER PROTEIN K"/>
    <property type="match status" value="1"/>
</dbReference>
<dbReference type="Pfam" id="PF02533">
    <property type="entry name" value="PsbK"/>
    <property type="match status" value="1"/>
</dbReference>
<dbReference type="SUPFAM" id="SSF161037">
    <property type="entry name" value="Photosystem II reaction center protein K, PsbK"/>
    <property type="match status" value="1"/>
</dbReference>
<accession>Q06FX8</accession>
<gene>
    <name evidence="1" type="primary">psbK</name>
</gene>
<proteinExistence type="inferred from homology"/>
<feature type="propeptide" id="PRO_0000276164" evidence="1">
    <location>
        <begin position="1"/>
        <end position="24"/>
    </location>
</feature>
<feature type="chain" id="PRO_0000276165" description="Photosystem II reaction center protein K" evidence="1">
    <location>
        <begin position="25"/>
        <end position="61"/>
    </location>
</feature>
<feature type="transmembrane region" description="Helical" evidence="1">
    <location>
        <begin position="40"/>
        <end position="60"/>
    </location>
</feature>
<evidence type="ECO:0000255" key="1">
    <source>
        <dbReference type="HAMAP-Rule" id="MF_00441"/>
    </source>
</evidence>
<comment type="function">
    <text evidence="1">One of the components of the core complex of photosystem II (PSII). PSII is a light-driven water:plastoquinone oxidoreductase that uses light energy to abstract electrons from H(2)O, generating O(2) and a proton gradient subsequently used for ATP formation. It consists of a core antenna complex that captures photons, and an electron transfer chain that converts photonic excitation into a charge separation.</text>
</comment>
<comment type="subunit">
    <text evidence="1">PSII is composed of 1 copy each of membrane proteins PsbA, PsbB, PsbC, PsbD, PsbE, PsbF, PsbH, PsbI, PsbJ, PsbK, PsbL, PsbM, PsbT, PsbX, PsbY, PsbZ, Psb30/Ycf12, at least 3 peripheral proteins of the oxygen-evolving complex and a large number of cofactors. It forms dimeric complexes.</text>
</comment>
<comment type="subcellular location">
    <subcellularLocation>
        <location evidence="1">Plastid</location>
        <location evidence="1">Chloroplast thylakoid membrane</location>
        <topology evidence="1">Single-pass membrane protein</topology>
    </subcellularLocation>
</comment>
<comment type="similarity">
    <text evidence="1">Belongs to the PsbK family.</text>
</comment>
<keyword id="KW-0150">Chloroplast</keyword>
<keyword id="KW-0472">Membrane</keyword>
<keyword id="KW-0602">Photosynthesis</keyword>
<keyword id="KW-0604">Photosystem II</keyword>
<keyword id="KW-0934">Plastid</keyword>
<keyword id="KW-0674">Reaction center</keyword>
<keyword id="KW-0793">Thylakoid</keyword>
<keyword id="KW-0812">Transmembrane</keyword>
<keyword id="KW-1133">Transmembrane helix</keyword>
<organism>
    <name type="scientific">Pelargonium hortorum</name>
    <name type="common">Common geranium</name>
    <name type="synonym">Pelargonium inquinans x Pelargonium zonale</name>
    <dbReference type="NCBI Taxonomy" id="4031"/>
    <lineage>
        <taxon>Eukaryota</taxon>
        <taxon>Viridiplantae</taxon>
        <taxon>Streptophyta</taxon>
        <taxon>Embryophyta</taxon>
        <taxon>Tracheophyta</taxon>
        <taxon>Spermatophyta</taxon>
        <taxon>Magnoliopsida</taxon>
        <taxon>eudicotyledons</taxon>
        <taxon>Gunneridae</taxon>
        <taxon>Pentapetalae</taxon>
        <taxon>rosids</taxon>
        <taxon>malvids</taxon>
        <taxon>Geraniales</taxon>
        <taxon>Geraniaceae</taxon>
        <taxon>Pelargonium</taxon>
    </lineage>
</organism>
<name>PSBK_PELHO</name>